<name>RCI1_ECOLX</name>
<feature type="chain" id="PRO_0000197535" description="Shufflon-specific DNA recombinase">
    <location>
        <begin position="1"/>
        <end position="384"/>
    </location>
</feature>
<feature type="domain" description="Core-binding (CB)" evidence="2">
    <location>
        <begin position="9"/>
        <end position="96"/>
    </location>
</feature>
<feature type="domain" description="Tyr recombinase" evidence="1">
    <location>
        <begin position="118"/>
        <end position="284"/>
    </location>
</feature>
<feature type="active site" evidence="1">
    <location>
        <position position="155"/>
    </location>
</feature>
<feature type="active site" evidence="1">
    <location>
        <position position="180"/>
    </location>
</feature>
<feature type="active site" evidence="1">
    <location>
        <position position="235"/>
    </location>
</feature>
<feature type="active site" evidence="1">
    <location>
        <position position="238"/>
    </location>
</feature>
<feature type="active site" evidence="1">
    <location>
        <position position="262"/>
    </location>
</feature>
<feature type="active site" description="O-(3'-phospho-DNA)-tyrosine intermediate" evidence="1">
    <location>
        <position position="271"/>
    </location>
</feature>
<organism>
    <name type="scientific">Escherichia coli</name>
    <dbReference type="NCBI Taxonomy" id="562"/>
    <lineage>
        <taxon>Bacteria</taxon>
        <taxon>Pseudomonadati</taxon>
        <taxon>Pseudomonadota</taxon>
        <taxon>Gammaproteobacteria</taxon>
        <taxon>Enterobacterales</taxon>
        <taxon>Enterobacteriaceae</taxon>
        <taxon>Escherichia</taxon>
    </lineage>
</organism>
<geneLocation type="plasmid">
    <name>IncI1 R64</name>
</geneLocation>
<proteinExistence type="inferred from homology"/>
<reference key="1">
    <citation type="journal article" date="1988" name="Mol. Gen. Genet.">
        <title>Nucleotide sequence of the rci gene encoding shufflon-specific DNA recombinase in the IncI1 plasmid R64: homology to the site-specific recombinases of integrase family.</title>
        <authorList>
            <person name="Kubo A."/>
            <person name="Kusukawa A."/>
            <person name="Komano T."/>
        </authorList>
    </citation>
    <scope>NUCLEOTIDE SEQUENCE [GENOMIC DNA]</scope>
</reference>
<reference key="2">
    <citation type="journal article" date="1987" name="Nucleic Acids Res.">
        <title>Shufflon: multi-inversion of four contiguous DNA segments of plasmid R64 creates seven different open reading frames.</title>
        <authorList>
            <person name="Komano T."/>
            <person name="Kubo A."/>
            <person name="Nisioka T."/>
        </authorList>
    </citation>
    <scope>NUCLEOTIDE SEQUENCE [GENOMIC DNA] OF 1-42</scope>
</reference>
<protein>
    <recommendedName>
        <fullName>Shufflon-specific DNA recombinase</fullName>
    </recommendedName>
</protein>
<dbReference type="EMBL" id="AB027308">
    <property type="protein sequence ID" value="BAA77989.1"/>
    <property type="molecule type" value="Genomic_DNA"/>
</dbReference>
<dbReference type="PIR" id="S03815">
    <property type="entry name" value="S03815"/>
</dbReference>
<dbReference type="RefSeq" id="WP_001139957.1">
    <property type="nucleotide sequence ID" value="NZ_WVVP01000033.1"/>
</dbReference>
<dbReference type="RefSeq" id="YP_006954452.1">
    <property type="nucleotide sequence ID" value="NC_019097.1"/>
</dbReference>
<dbReference type="RefSeq" id="YP_008998813.1">
    <property type="nucleotide sequence ID" value="NC_023329.1"/>
</dbReference>
<dbReference type="RefSeq" id="YP_009061175.1">
    <property type="nucleotide sequence ID" value="NC_024975.1"/>
</dbReference>
<dbReference type="RefSeq" id="YP_009061389.1">
    <property type="nucleotide sequence ID" value="NC_024977.1"/>
</dbReference>
<dbReference type="RefSeq" id="YP_009061640.1">
    <property type="nucleotide sequence ID" value="NC_024979.1"/>
</dbReference>
<dbReference type="RefSeq" id="YP_009072185.1">
    <property type="nucleotide sequence ID" value="NC_025198.1"/>
</dbReference>
<dbReference type="SMR" id="P10487"/>
<dbReference type="GO" id="GO:0003677">
    <property type="term" value="F:DNA binding"/>
    <property type="evidence" value="ECO:0007669"/>
    <property type="project" value="UniProtKB-KW"/>
</dbReference>
<dbReference type="GO" id="GO:0015074">
    <property type="term" value="P:DNA integration"/>
    <property type="evidence" value="ECO:0007669"/>
    <property type="project" value="UniProtKB-KW"/>
</dbReference>
<dbReference type="GO" id="GO:0006310">
    <property type="term" value="P:DNA recombination"/>
    <property type="evidence" value="ECO:0007669"/>
    <property type="project" value="UniProtKB-KW"/>
</dbReference>
<dbReference type="CDD" id="cd00796">
    <property type="entry name" value="INT_Rci_Hp1_C"/>
    <property type="match status" value="1"/>
</dbReference>
<dbReference type="Gene3D" id="1.10.150.130">
    <property type="match status" value="1"/>
</dbReference>
<dbReference type="Gene3D" id="1.10.443.10">
    <property type="entry name" value="Intergrase catalytic core"/>
    <property type="match status" value="1"/>
</dbReference>
<dbReference type="InterPro" id="IPR044068">
    <property type="entry name" value="CB"/>
</dbReference>
<dbReference type="InterPro" id="IPR011010">
    <property type="entry name" value="DNA_brk_join_enz"/>
</dbReference>
<dbReference type="InterPro" id="IPR013762">
    <property type="entry name" value="Integrase-like_cat_sf"/>
</dbReference>
<dbReference type="InterPro" id="IPR002104">
    <property type="entry name" value="Integrase_catalytic"/>
</dbReference>
<dbReference type="InterPro" id="IPR010998">
    <property type="entry name" value="Integrase_recombinase_N"/>
</dbReference>
<dbReference type="InterPro" id="IPR035069">
    <property type="entry name" value="TTHA1013/TTHA0281-like"/>
</dbReference>
<dbReference type="InterPro" id="IPR050090">
    <property type="entry name" value="Tyrosine_recombinase_XerCD"/>
</dbReference>
<dbReference type="PANTHER" id="PTHR30349:SF94">
    <property type="entry name" value="INTEGRASE_RECOMBINASE HI_1414-RELATED"/>
    <property type="match status" value="1"/>
</dbReference>
<dbReference type="PANTHER" id="PTHR30349">
    <property type="entry name" value="PHAGE INTEGRASE-RELATED"/>
    <property type="match status" value="1"/>
</dbReference>
<dbReference type="Pfam" id="PF00589">
    <property type="entry name" value="Phage_integrase"/>
    <property type="match status" value="1"/>
</dbReference>
<dbReference type="SUPFAM" id="SSF56349">
    <property type="entry name" value="DNA breaking-rejoining enzymes"/>
    <property type="match status" value="1"/>
</dbReference>
<dbReference type="SUPFAM" id="SSF143100">
    <property type="entry name" value="TTHA1013/TTHA0281-like"/>
    <property type="match status" value="1"/>
</dbReference>
<dbReference type="PROSITE" id="PS51900">
    <property type="entry name" value="CB"/>
    <property type="match status" value="1"/>
</dbReference>
<dbReference type="PROSITE" id="PS51898">
    <property type="entry name" value="TYR_RECOMBINASE"/>
    <property type="match status" value="1"/>
</dbReference>
<sequence>MPSPRIRKMSLSRALDKYLKTVSVHKKGHQQEFYRSNVIKRYPIALRNMDEITTVDIATYRDVRLAEINPRTGKPITGNTVRLELALLSSLFNIARVEWGTCRTNPVELVRKPKVSSGRDRRLTSSEERRLSRYFREKNLMLYVIFHLALETAMRQGEILALRWEHIDLRHGVAHLPETKNGHSRDVPLSRRARNFLQMMPVNLHGNVFDYTASGFKNAWRIATQRLRIEDLHFHDLRHEAISRFFELGSLNVMEIAAISGHRSMNMLKRYTHLRAWQLVSKLDARRRQTQKVAAWFVPYPAHITTIDEENGQKAHRIEIGDFDNLHVTATTKEEAVHRASEVLLRTLAIAAQKGERVPSPGALPVNDPDYIMICPLNPGSTPL</sequence>
<keyword id="KW-0229">DNA integration</keyword>
<keyword id="KW-0233">DNA recombination</keyword>
<keyword id="KW-0238">DNA-binding</keyword>
<keyword id="KW-0614">Plasmid</keyword>
<gene>
    <name type="primary">rci</name>
</gene>
<comment type="function">
    <text>Shufflon-specific DNA recombinase.</text>
</comment>
<comment type="similarity">
    <text evidence="3">Belongs to the 'phage' integrase family.</text>
</comment>
<evidence type="ECO:0000255" key="1">
    <source>
        <dbReference type="PROSITE-ProRule" id="PRU01246"/>
    </source>
</evidence>
<evidence type="ECO:0000255" key="2">
    <source>
        <dbReference type="PROSITE-ProRule" id="PRU01248"/>
    </source>
</evidence>
<evidence type="ECO:0000305" key="3"/>
<accession>P10487</accession>